<organism>
    <name type="scientific">Bordetella pertussis (strain Tohama I / ATCC BAA-589 / NCTC 13251)</name>
    <dbReference type="NCBI Taxonomy" id="257313"/>
    <lineage>
        <taxon>Bacteria</taxon>
        <taxon>Pseudomonadati</taxon>
        <taxon>Pseudomonadota</taxon>
        <taxon>Betaproteobacteria</taxon>
        <taxon>Burkholderiales</taxon>
        <taxon>Alcaligenaceae</taxon>
        <taxon>Bordetella</taxon>
    </lineage>
</organism>
<evidence type="ECO:0000255" key="1">
    <source>
        <dbReference type="HAMAP-Rule" id="MF_00059"/>
    </source>
</evidence>
<gene>
    <name evidence="1" type="primary">rpoA</name>
    <name type="ordered locus">BP3642</name>
</gene>
<keyword id="KW-0240">DNA-directed RNA polymerase</keyword>
<keyword id="KW-0548">Nucleotidyltransferase</keyword>
<keyword id="KW-1185">Reference proteome</keyword>
<keyword id="KW-0804">Transcription</keyword>
<keyword id="KW-0808">Transferase</keyword>
<protein>
    <recommendedName>
        <fullName evidence="1">DNA-directed RNA polymerase subunit alpha</fullName>
        <shortName evidence="1">RNAP subunit alpha</shortName>
        <ecNumber evidence="1">2.7.7.6</ecNumber>
    </recommendedName>
    <alternativeName>
        <fullName evidence="1">RNA polymerase subunit alpha</fullName>
    </alternativeName>
    <alternativeName>
        <fullName evidence="1">Transcriptase subunit alpha</fullName>
    </alternativeName>
</protein>
<comment type="function">
    <text evidence="1">DNA-dependent RNA polymerase catalyzes the transcription of DNA into RNA using the four ribonucleoside triphosphates as substrates.</text>
</comment>
<comment type="catalytic activity">
    <reaction evidence="1">
        <text>RNA(n) + a ribonucleoside 5'-triphosphate = RNA(n+1) + diphosphate</text>
        <dbReference type="Rhea" id="RHEA:21248"/>
        <dbReference type="Rhea" id="RHEA-COMP:14527"/>
        <dbReference type="Rhea" id="RHEA-COMP:17342"/>
        <dbReference type="ChEBI" id="CHEBI:33019"/>
        <dbReference type="ChEBI" id="CHEBI:61557"/>
        <dbReference type="ChEBI" id="CHEBI:140395"/>
        <dbReference type="EC" id="2.7.7.6"/>
    </reaction>
</comment>
<comment type="subunit">
    <text evidence="1">Homodimer. The RNAP catalytic core consists of 2 alpha, 1 beta, 1 beta' and 1 omega subunit. When a sigma factor is associated with the core the holoenzyme is formed, which can initiate transcription.</text>
</comment>
<comment type="domain">
    <text evidence="1">The N-terminal domain is essential for RNAP assembly and basal transcription, whereas the C-terminal domain is involved in interaction with transcriptional regulators and with upstream promoter elements.</text>
</comment>
<comment type="similarity">
    <text evidence="1">Belongs to the RNA polymerase alpha chain family.</text>
</comment>
<reference key="1">
    <citation type="journal article" date="1994" name="J. Bacteriol.">
        <title>Effect of mutations causing overexpression of RNA polymerase alpha subunit on regulation of virulence factors in Bordetella pertussis.</title>
        <authorList>
            <person name="Carbonetti N.H."/>
            <person name="Fuchs T.M."/>
            <person name="Patamawenu A.A."/>
            <person name="Irish T.J."/>
            <person name="Deppisch H."/>
            <person name="Gross R."/>
        </authorList>
    </citation>
    <scope>NUCLEOTIDE SEQUENCE [GENOMIC DNA]</scope>
    <source>
        <strain>Tohama I / ATCC BAA-589 / NCTC 13251</strain>
    </source>
</reference>
<reference key="2">
    <citation type="journal article" date="2003" name="Nat. Genet.">
        <title>Comparative analysis of the genome sequences of Bordetella pertussis, Bordetella parapertussis and Bordetella bronchiseptica.</title>
        <authorList>
            <person name="Parkhill J."/>
            <person name="Sebaihia M."/>
            <person name="Preston A."/>
            <person name="Murphy L.D."/>
            <person name="Thomson N.R."/>
            <person name="Harris D.E."/>
            <person name="Holden M.T.G."/>
            <person name="Churcher C.M."/>
            <person name="Bentley S.D."/>
            <person name="Mungall K.L."/>
            <person name="Cerdeno-Tarraga A.-M."/>
            <person name="Temple L."/>
            <person name="James K.D."/>
            <person name="Harris B."/>
            <person name="Quail M.A."/>
            <person name="Achtman M."/>
            <person name="Atkin R."/>
            <person name="Baker S."/>
            <person name="Basham D."/>
            <person name="Bason N."/>
            <person name="Cherevach I."/>
            <person name="Chillingworth T."/>
            <person name="Collins M."/>
            <person name="Cronin A."/>
            <person name="Davis P."/>
            <person name="Doggett J."/>
            <person name="Feltwell T."/>
            <person name="Goble A."/>
            <person name="Hamlin N."/>
            <person name="Hauser H."/>
            <person name="Holroyd S."/>
            <person name="Jagels K."/>
            <person name="Leather S."/>
            <person name="Moule S."/>
            <person name="Norberczak H."/>
            <person name="O'Neil S."/>
            <person name="Ormond D."/>
            <person name="Price C."/>
            <person name="Rabbinowitsch E."/>
            <person name="Rutter S."/>
            <person name="Sanders M."/>
            <person name="Saunders D."/>
            <person name="Seeger K."/>
            <person name="Sharp S."/>
            <person name="Simmonds M."/>
            <person name="Skelton J."/>
            <person name="Squares R."/>
            <person name="Squares S."/>
            <person name="Stevens K."/>
            <person name="Unwin L."/>
            <person name="Whitehead S."/>
            <person name="Barrell B.G."/>
            <person name="Maskell D.J."/>
        </authorList>
    </citation>
    <scope>NUCLEOTIDE SEQUENCE [LARGE SCALE GENOMIC DNA]</scope>
    <source>
        <strain>Tohama I / ATCC BAA-589 / NCTC 13251</strain>
    </source>
</reference>
<feature type="chain" id="PRO_0000175275" description="DNA-directed RNA polymerase subunit alpha">
    <location>
        <begin position="1"/>
        <end position="328"/>
    </location>
</feature>
<feature type="region of interest" description="Alpha N-terminal domain (alpha-NTD)" evidence="1">
    <location>
        <begin position="1"/>
        <end position="232"/>
    </location>
</feature>
<feature type="region of interest" description="Alpha C-terminal domain (alpha-CTD)" evidence="1">
    <location>
        <begin position="248"/>
        <end position="328"/>
    </location>
</feature>
<name>RPOA_BORPE</name>
<dbReference type="EC" id="2.7.7.6" evidence="1"/>
<dbReference type="EMBL" id="Z26647">
    <property type="protein sequence ID" value="CAA81390.1"/>
    <property type="molecule type" value="Genomic_DNA"/>
</dbReference>
<dbReference type="EMBL" id="BX640422">
    <property type="protein sequence ID" value="CAE43899.1"/>
    <property type="molecule type" value="Genomic_DNA"/>
</dbReference>
<dbReference type="PIR" id="A55222">
    <property type="entry name" value="A55222"/>
</dbReference>
<dbReference type="RefSeq" id="NP_882151.1">
    <property type="nucleotide sequence ID" value="NC_002929.2"/>
</dbReference>
<dbReference type="RefSeq" id="WP_003806932.1">
    <property type="nucleotide sequence ID" value="NZ_CP039022.1"/>
</dbReference>
<dbReference type="SMR" id="P0A4E5"/>
<dbReference type="STRING" id="257313.BP3642"/>
<dbReference type="PaxDb" id="257313-BP3642"/>
<dbReference type="KEGG" id="bpe:BP3642"/>
<dbReference type="PATRIC" id="fig|257313.5.peg.3939"/>
<dbReference type="eggNOG" id="COG0202">
    <property type="taxonomic scope" value="Bacteria"/>
</dbReference>
<dbReference type="HOGENOM" id="CLU_053084_0_1_4"/>
<dbReference type="Proteomes" id="UP000002676">
    <property type="component" value="Chromosome"/>
</dbReference>
<dbReference type="GO" id="GO:0005737">
    <property type="term" value="C:cytoplasm"/>
    <property type="evidence" value="ECO:0007669"/>
    <property type="project" value="UniProtKB-ARBA"/>
</dbReference>
<dbReference type="GO" id="GO:0000428">
    <property type="term" value="C:DNA-directed RNA polymerase complex"/>
    <property type="evidence" value="ECO:0007669"/>
    <property type="project" value="UniProtKB-KW"/>
</dbReference>
<dbReference type="GO" id="GO:0003677">
    <property type="term" value="F:DNA binding"/>
    <property type="evidence" value="ECO:0007669"/>
    <property type="project" value="UniProtKB-UniRule"/>
</dbReference>
<dbReference type="GO" id="GO:0003899">
    <property type="term" value="F:DNA-directed RNA polymerase activity"/>
    <property type="evidence" value="ECO:0007669"/>
    <property type="project" value="UniProtKB-UniRule"/>
</dbReference>
<dbReference type="GO" id="GO:0046983">
    <property type="term" value="F:protein dimerization activity"/>
    <property type="evidence" value="ECO:0007669"/>
    <property type="project" value="InterPro"/>
</dbReference>
<dbReference type="GO" id="GO:0006351">
    <property type="term" value="P:DNA-templated transcription"/>
    <property type="evidence" value="ECO:0007669"/>
    <property type="project" value="UniProtKB-UniRule"/>
</dbReference>
<dbReference type="CDD" id="cd06928">
    <property type="entry name" value="RNAP_alpha_NTD"/>
    <property type="match status" value="1"/>
</dbReference>
<dbReference type="FunFam" id="1.10.150.20:FF:000001">
    <property type="entry name" value="DNA-directed RNA polymerase subunit alpha"/>
    <property type="match status" value="1"/>
</dbReference>
<dbReference type="FunFam" id="2.170.120.12:FF:000001">
    <property type="entry name" value="DNA-directed RNA polymerase subunit alpha"/>
    <property type="match status" value="1"/>
</dbReference>
<dbReference type="Gene3D" id="1.10.150.20">
    <property type="entry name" value="5' to 3' exonuclease, C-terminal subdomain"/>
    <property type="match status" value="1"/>
</dbReference>
<dbReference type="Gene3D" id="2.170.120.12">
    <property type="entry name" value="DNA-directed RNA polymerase, insert domain"/>
    <property type="match status" value="1"/>
</dbReference>
<dbReference type="Gene3D" id="3.30.1360.10">
    <property type="entry name" value="RNA polymerase, RBP11-like subunit"/>
    <property type="match status" value="1"/>
</dbReference>
<dbReference type="HAMAP" id="MF_00059">
    <property type="entry name" value="RNApol_bact_RpoA"/>
    <property type="match status" value="1"/>
</dbReference>
<dbReference type="InterPro" id="IPR011262">
    <property type="entry name" value="DNA-dir_RNA_pol_insert"/>
</dbReference>
<dbReference type="InterPro" id="IPR011263">
    <property type="entry name" value="DNA-dir_RNA_pol_RpoA/D/Rpb3"/>
</dbReference>
<dbReference type="InterPro" id="IPR011773">
    <property type="entry name" value="DNA-dir_RpoA"/>
</dbReference>
<dbReference type="InterPro" id="IPR036603">
    <property type="entry name" value="RBP11-like"/>
</dbReference>
<dbReference type="InterPro" id="IPR011260">
    <property type="entry name" value="RNAP_asu_C"/>
</dbReference>
<dbReference type="InterPro" id="IPR036643">
    <property type="entry name" value="RNApol_insert_sf"/>
</dbReference>
<dbReference type="NCBIfam" id="NF003513">
    <property type="entry name" value="PRK05182.1-2"/>
    <property type="match status" value="1"/>
</dbReference>
<dbReference type="NCBIfam" id="NF003519">
    <property type="entry name" value="PRK05182.2-5"/>
    <property type="match status" value="1"/>
</dbReference>
<dbReference type="NCBIfam" id="TIGR02027">
    <property type="entry name" value="rpoA"/>
    <property type="match status" value="1"/>
</dbReference>
<dbReference type="Pfam" id="PF01000">
    <property type="entry name" value="RNA_pol_A_bac"/>
    <property type="match status" value="1"/>
</dbReference>
<dbReference type="Pfam" id="PF03118">
    <property type="entry name" value="RNA_pol_A_CTD"/>
    <property type="match status" value="1"/>
</dbReference>
<dbReference type="Pfam" id="PF01193">
    <property type="entry name" value="RNA_pol_L"/>
    <property type="match status" value="1"/>
</dbReference>
<dbReference type="SMART" id="SM00662">
    <property type="entry name" value="RPOLD"/>
    <property type="match status" value="1"/>
</dbReference>
<dbReference type="SUPFAM" id="SSF47789">
    <property type="entry name" value="C-terminal domain of RNA polymerase alpha subunit"/>
    <property type="match status" value="1"/>
</dbReference>
<dbReference type="SUPFAM" id="SSF56553">
    <property type="entry name" value="Insert subdomain of RNA polymerase alpha subunit"/>
    <property type="match status" value="1"/>
</dbReference>
<dbReference type="SUPFAM" id="SSF55257">
    <property type="entry name" value="RBP11-like subunits of RNA polymerase"/>
    <property type="match status" value="1"/>
</dbReference>
<proteinExistence type="inferred from homology"/>
<accession>P0A4E5</accession>
<accession>P37368</accession>
<sequence length="328" mass="36159">MSTQGFLKPRSIEVEPVGAHHAKIVMEPFERGYGHTLGNALRRILLSSMTGYAPTEVQMTGVVHEYSTIAGVREDVVDILLNLKGVVFKLHNRDEVTLVLRKNGAGAVVASDIELPHDVEIINPDHLICNLTDAGKIEMQVKVEKGRGYVPGNVRALSEDRTHTIGRIVLDASFSPVRRVSYAVESARVEQRTDLDKLVLDIETNGVISPEEAVRQAARILMDQISVFAALEGAGDAYEPPVRGTPQIDPVLLRPVDDLELTVRSANCLKAENIYYIGDLIQRTENELLKTPNLGRKSLNEIKEVLAARGLTLGMKLENWPPLGLERP</sequence>